<evidence type="ECO:0000250" key="1"/>
<evidence type="ECO:0000269" key="2">
    <source>
    </source>
</evidence>
<evidence type="ECO:0000305" key="3"/>
<keyword id="KW-0106">Calcium</keyword>
<keyword id="KW-0903">Direct protein sequencing</keyword>
<keyword id="KW-1015">Disulfide bond</keyword>
<keyword id="KW-0378">Hydrolase</keyword>
<keyword id="KW-0442">Lipid degradation</keyword>
<keyword id="KW-0443">Lipid metabolism</keyword>
<keyword id="KW-0479">Metal-binding</keyword>
<keyword id="KW-0528">Neurotoxin</keyword>
<keyword id="KW-0638">Presynaptic neurotoxin</keyword>
<keyword id="KW-0964">Secreted</keyword>
<keyword id="KW-0800">Toxin</keyword>
<feature type="chain" id="PRO_0000418566" description="Basic phospholipase A2 CB1">
    <location>
        <begin position="1"/>
        <end position="23" status="greater than"/>
    </location>
</feature>
<feature type="non-terminal residue">
    <location>
        <position position="23"/>
    </location>
</feature>
<sequence length="23" mass="2857">HLLQFNKMIKFETRKNAIPFYAF</sequence>
<accession>P0DJN1</accession>
<dbReference type="EC" id="3.1.1.4"/>
<dbReference type="GO" id="GO:0005576">
    <property type="term" value="C:extracellular region"/>
    <property type="evidence" value="ECO:0007669"/>
    <property type="project" value="UniProtKB-SubCell"/>
</dbReference>
<dbReference type="GO" id="GO:0046872">
    <property type="term" value="F:metal ion binding"/>
    <property type="evidence" value="ECO:0007669"/>
    <property type="project" value="UniProtKB-KW"/>
</dbReference>
<dbReference type="GO" id="GO:0004623">
    <property type="term" value="F:phospholipase A2 activity"/>
    <property type="evidence" value="ECO:0007669"/>
    <property type="project" value="UniProtKB-EC"/>
</dbReference>
<dbReference type="GO" id="GO:0090729">
    <property type="term" value="F:toxin activity"/>
    <property type="evidence" value="ECO:0007669"/>
    <property type="project" value="UniProtKB-KW"/>
</dbReference>
<dbReference type="GO" id="GO:0016042">
    <property type="term" value="P:lipid catabolic process"/>
    <property type="evidence" value="ECO:0007669"/>
    <property type="project" value="UniProtKB-KW"/>
</dbReference>
<organism>
    <name type="scientific">Crotalus durissus cumanensis</name>
    <name type="common">South American rattlesnake</name>
    <dbReference type="NCBI Taxonomy" id="184542"/>
    <lineage>
        <taxon>Eukaryota</taxon>
        <taxon>Metazoa</taxon>
        <taxon>Chordata</taxon>
        <taxon>Craniata</taxon>
        <taxon>Vertebrata</taxon>
        <taxon>Euteleostomi</taxon>
        <taxon>Lepidosauria</taxon>
        <taxon>Squamata</taxon>
        <taxon>Bifurcata</taxon>
        <taxon>Unidentata</taxon>
        <taxon>Episquamata</taxon>
        <taxon>Toxicofera</taxon>
        <taxon>Serpentes</taxon>
        <taxon>Colubroidea</taxon>
        <taxon>Viperidae</taxon>
        <taxon>Crotalinae</taxon>
        <taxon>Crotalus</taxon>
    </lineage>
</organism>
<name>PA2B1_CRODM</name>
<proteinExistence type="evidence at protein level"/>
<comment type="function">
    <text evidence="2">Snake venom phospholipase A2 (PLA2) that shows presynaptic neurotoxicity. PLA2 catalyzes the calcium-dependent hydrolysis of the 2-acyl groups in 3-sn-phosphoglycerides.</text>
</comment>
<comment type="catalytic activity">
    <reaction>
        <text>a 1,2-diacyl-sn-glycero-3-phosphocholine + H2O = a 1-acyl-sn-glycero-3-phosphocholine + a fatty acid + H(+)</text>
        <dbReference type="Rhea" id="RHEA:15801"/>
        <dbReference type="ChEBI" id="CHEBI:15377"/>
        <dbReference type="ChEBI" id="CHEBI:15378"/>
        <dbReference type="ChEBI" id="CHEBI:28868"/>
        <dbReference type="ChEBI" id="CHEBI:57643"/>
        <dbReference type="ChEBI" id="CHEBI:58168"/>
        <dbReference type="EC" id="3.1.1.4"/>
    </reaction>
</comment>
<comment type="cofactor">
    <cofactor evidence="1">
        <name>Ca(2+)</name>
        <dbReference type="ChEBI" id="CHEBI:29108"/>
    </cofactor>
    <text evidence="1">Binds 1 Ca(2+) ion.</text>
</comment>
<comment type="subunit">
    <text evidence="2">Heterodimer of an acidic subunit and a basic chain. The acidic subunit is non-toxic, without enzymatic activity and comprises 3 peptides that are cross-linked by 7 disulfide bridges. The basic subunit is toxic, has phospholipase A2 activity and is composed of a single chain.</text>
</comment>
<comment type="subcellular location">
    <subcellularLocation>
        <location>Secreted</location>
    </subcellularLocation>
</comment>
<comment type="tissue specificity">
    <text>Expressed by the venom gland.</text>
</comment>
<comment type="PTM">
    <text evidence="1">Contains 7 disulfide bonds.</text>
</comment>
<comment type="mass spectrometry" mass="14183.0" method="Electrospray" evidence="2"/>
<comment type="similarity">
    <text evidence="3">Belongs to the phospholipase A2 family. Group II subfamily.</text>
</comment>
<reference key="1">
    <citation type="journal article" date="2004" name="Biochem. J.">
        <title>Molecular evolution and structure-function relationships of crotoxin-like and asparagine-6-containing phospholipases A2 in pit viper venoms.</title>
        <authorList>
            <person name="Chen Y.-H."/>
            <person name="Wang Y.-M."/>
            <person name="Hseu M.-J."/>
            <person name="Tsai I.-H."/>
        </authorList>
    </citation>
    <scope>PROTEIN SEQUENCE</scope>
    <scope>FUNCTION</scope>
    <scope>SUBUNIT</scope>
    <scope>MASS SPECTROMETRY</scope>
    <source>
        <tissue>Venom</tissue>
    </source>
</reference>
<protein>
    <recommendedName>
        <fullName>Basic phospholipase A2 CB1</fullName>
        <shortName>svPLA2</shortName>
        <ecNumber>3.1.1.4</ecNumber>
    </recommendedName>
    <alternativeName>
        <fullName>Phosphatidylcholine 2-acylhydrolase</fullName>
    </alternativeName>
</protein>